<evidence type="ECO:0000250" key="1"/>
<evidence type="ECO:0000255" key="2"/>
<evidence type="ECO:0000305" key="3"/>
<sequence>MMKYFLVLCLVVLGVAAVQAAALEDEKFLNLAESLAMPEESRCKARRYGCTDKAECCSEKCAYPALTCAFNWSCEKVCA</sequence>
<keyword id="KW-1015">Disulfide bond</keyword>
<keyword id="KW-0325">Glycoprotein</keyword>
<keyword id="KW-0872">Ion channel impairing toxin</keyword>
<keyword id="KW-0960">Knottin</keyword>
<keyword id="KW-0964">Secreted</keyword>
<keyword id="KW-0732">Signal</keyword>
<keyword id="KW-0800">Toxin</keyword>
<feature type="signal peptide" evidence="2">
    <location>
        <begin position="1"/>
        <end position="20"/>
    </location>
</feature>
<feature type="chain" id="PRO_0000429227" description="Toxin ICK-20">
    <location>
        <begin position="21"/>
        <end position="79"/>
    </location>
</feature>
<feature type="glycosylation site" description="N-linked (GlcNAc...) asparagine" evidence="2">
    <location>
        <position position="71"/>
    </location>
</feature>
<feature type="disulfide bond" evidence="1">
    <location>
        <begin position="43"/>
        <end position="57"/>
    </location>
</feature>
<feature type="disulfide bond" evidence="1">
    <location>
        <begin position="50"/>
        <end position="61"/>
    </location>
</feature>
<feature type="disulfide bond" evidence="1">
    <location>
        <begin position="56"/>
        <end position="78"/>
    </location>
</feature>
<feature type="disulfide bond" evidence="1">
    <location>
        <begin position="68"/>
        <end position="74"/>
    </location>
</feature>
<dbReference type="EMBL" id="GAQE01000023">
    <property type="protein sequence ID" value="JAB84531.1"/>
    <property type="molecule type" value="Transcribed_RNA"/>
</dbReference>
<dbReference type="SMR" id="W4VS23"/>
<dbReference type="ArachnoServer" id="AS002056">
    <property type="toxin name" value="U14-barytoxin-Tl1a"/>
</dbReference>
<dbReference type="GO" id="GO:0005576">
    <property type="term" value="C:extracellular region"/>
    <property type="evidence" value="ECO:0007669"/>
    <property type="project" value="UniProtKB-SubCell"/>
</dbReference>
<dbReference type="GO" id="GO:0099106">
    <property type="term" value="F:ion channel regulator activity"/>
    <property type="evidence" value="ECO:0007669"/>
    <property type="project" value="UniProtKB-KW"/>
</dbReference>
<dbReference type="GO" id="GO:0090729">
    <property type="term" value="F:toxin activity"/>
    <property type="evidence" value="ECO:0007669"/>
    <property type="project" value="UniProtKB-KW"/>
</dbReference>
<organism>
    <name type="scientific">Trittame loki</name>
    <name type="common">Brush-footed trapdoor spider</name>
    <dbReference type="NCBI Taxonomy" id="1295018"/>
    <lineage>
        <taxon>Eukaryota</taxon>
        <taxon>Metazoa</taxon>
        <taxon>Ecdysozoa</taxon>
        <taxon>Arthropoda</taxon>
        <taxon>Chelicerata</taxon>
        <taxon>Arachnida</taxon>
        <taxon>Araneae</taxon>
        <taxon>Mygalomorphae</taxon>
        <taxon>Barychelidae</taxon>
        <taxon>Trittame</taxon>
    </lineage>
</organism>
<proteinExistence type="evidence at transcript level"/>
<reference key="1">
    <citation type="journal article" date="2013" name="Toxins">
        <title>A proteomics and transcriptomics investigation of the venom from the barychelid spider Trittame loki (brush-foot trapdoor).</title>
        <authorList>
            <person name="Undheim E.A."/>
            <person name="Sunagar K."/>
            <person name="Herzig V."/>
            <person name="Kely L."/>
            <person name="Low D.H."/>
            <person name="Jackson T.N."/>
            <person name="Jones A."/>
            <person name="Kurniawan N."/>
            <person name="King G.F."/>
            <person name="Ali S.A."/>
            <person name="Antunes A."/>
            <person name="Ruder T."/>
            <person name="Fry B.G."/>
        </authorList>
    </citation>
    <scope>NUCLEOTIDE SEQUENCE [MRNA]</scope>
    <source>
        <tissue>Venom gland</tissue>
    </source>
</reference>
<name>ICK20_TRILK</name>
<accession>W4VS23</accession>
<protein>
    <recommendedName>
        <fullName>Toxin ICK-20</fullName>
    </recommendedName>
</protein>
<comment type="function">
    <text evidence="3">Ion channel inhibitor.</text>
</comment>
<comment type="subcellular location">
    <subcellularLocation>
        <location evidence="1">Secreted</location>
    </subcellularLocation>
</comment>
<comment type="tissue specificity">
    <text>Expressed by the venom gland.</text>
</comment>
<comment type="domain">
    <text evidence="1">The presence of a 'disulfide through disulfide knot' structurally defines this protein as a knottin.</text>
</comment>
<comment type="similarity">
    <text>Belongs to the neurotoxin 13 (insecticidal toxin ABC) family. ICK-21 subfamily.</text>
</comment>